<proteinExistence type="evidence at transcript level"/>
<comment type="function">
    <text evidence="1">Negative regulator of class I heat shock genes (grpE-dnaK-dnaJ and groELS operons). Prevents heat-shock induction of these operons.</text>
</comment>
<comment type="induction">
    <text>By heat shock.</text>
</comment>
<comment type="similarity">
    <text evidence="1">Belongs to the HrcA family.</text>
</comment>
<reference key="1">
    <citation type="journal article" date="1994" name="J. Bacteriol.">
        <title>Molecular cloning of two new heat shock genes related to the hsp70 genes in Staphylococcus aureus.</title>
        <authorList>
            <person name="Ohta T."/>
            <person name="Saito K."/>
            <person name="Kuroda M."/>
            <person name="Honda K."/>
            <person name="Hirata H."/>
            <person name="Hayashi H."/>
        </authorList>
    </citation>
    <scope>NUCLEOTIDE SEQUENCE [GENOMIC DNA]</scope>
    <source>
        <strain>912</strain>
    </source>
</reference>
<sequence length="325" mass="36989">MITDRQLSILNAIVEDYVDFGQPVGSKTLIERHNLNVSPATIRNEMKQLEDLNYIEKTHSSSGRSPSQLGFRYYVNRLLEQTSHQKTNKLRRLNQLLVENQYDVSSALTYFADELSNISQYTTLVVHPNHKQDIINNVHLIRANPNLVIMVIVFSSGHVEHVHLASDIPFSNDKLNTISNFVTNKLTEFNQNLQDDIVSFVQSEQEEIFINKLINTMNNHISNQSNSIYMGGKVKLIDALNESNVSSIQPILQYIESNRIAELLQDISSPNINVKIGNEIDDSLSDISIVTSQYHFDETLKGQIAVIGPTAMHYQNVIQLLNRIW</sequence>
<name>HRCA_STAAU</name>
<evidence type="ECO:0000255" key="1">
    <source>
        <dbReference type="HAMAP-Rule" id="MF_00081"/>
    </source>
</evidence>
<organism>
    <name type="scientific">Staphylococcus aureus</name>
    <dbReference type="NCBI Taxonomy" id="1280"/>
    <lineage>
        <taxon>Bacteria</taxon>
        <taxon>Bacillati</taxon>
        <taxon>Bacillota</taxon>
        <taxon>Bacilli</taxon>
        <taxon>Bacillales</taxon>
        <taxon>Staphylococcaceae</taxon>
        <taxon>Staphylococcus</taxon>
    </lineage>
</organism>
<keyword id="KW-0678">Repressor</keyword>
<keyword id="KW-0346">Stress response</keyword>
<keyword id="KW-0804">Transcription</keyword>
<keyword id="KW-0805">Transcription regulation</keyword>
<gene>
    <name evidence="1" type="primary">hrcA</name>
</gene>
<protein>
    <recommendedName>
        <fullName evidence="1">Heat-inducible transcription repressor HrcA</fullName>
    </recommendedName>
</protein>
<feature type="chain" id="PRO_0000182530" description="Heat-inducible transcription repressor HrcA">
    <location>
        <begin position="1"/>
        <end position="325"/>
    </location>
</feature>
<dbReference type="EMBL" id="D30690">
    <property type="protein sequence ID" value="BAA06357.1"/>
    <property type="molecule type" value="Genomic_DNA"/>
</dbReference>
<dbReference type="RefSeq" id="WP_000627144.1">
    <property type="nucleotide sequence ID" value="NZ_WYDB01000002.1"/>
</dbReference>
<dbReference type="SMR" id="P68794"/>
<dbReference type="OMA" id="GPKRMDY"/>
<dbReference type="GO" id="GO:0003677">
    <property type="term" value="F:DNA binding"/>
    <property type="evidence" value="ECO:0007669"/>
    <property type="project" value="InterPro"/>
</dbReference>
<dbReference type="GO" id="GO:0045892">
    <property type="term" value="P:negative regulation of DNA-templated transcription"/>
    <property type="evidence" value="ECO:0007669"/>
    <property type="project" value="UniProtKB-UniRule"/>
</dbReference>
<dbReference type="FunFam" id="1.10.10.10:FF:000049">
    <property type="entry name" value="Heat-inducible transcription repressor HrcA"/>
    <property type="match status" value="1"/>
</dbReference>
<dbReference type="Gene3D" id="3.30.450.40">
    <property type="match status" value="1"/>
</dbReference>
<dbReference type="Gene3D" id="3.30.390.60">
    <property type="entry name" value="Heat-inducible transcription repressor hrca homolog, domain 3"/>
    <property type="match status" value="1"/>
</dbReference>
<dbReference type="Gene3D" id="1.10.10.10">
    <property type="entry name" value="Winged helix-like DNA-binding domain superfamily/Winged helix DNA-binding domain"/>
    <property type="match status" value="1"/>
</dbReference>
<dbReference type="HAMAP" id="MF_00081">
    <property type="entry name" value="HrcA"/>
    <property type="match status" value="1"/>
</dbReference>
<dbReference type="InterPro" id="IPR029016">
    <property type="entry name" value="GAF-like_dom_sf"/>
</dbReference>
<dbReference type="InterPro" id="IPR002571">
    <property type="entry name" value="HrcA"/>
</dbReference>
<dbReference type="InterPro" id="IPR021153">
    <property type="entry name" value="HrcA_C"/>
</dbReference>
<dbReference type="InterPro" id="IPR036388">
    <property type="entry name" value="WH-like_DNA-bd_sf"/>
</dbReference>
<dbReference type="InterPro" id="IPR036390">
    <property type="entry name" value="WH_DNA-bd_sf"/>
</dbReference>
<dbReference type="InterPro" id="IPR023120">
    <property type="entry name" value="WHTH_transcript_rep_HrcA_IDD"/>
</dbReference>
<dbReference type="NCBIfam" id="TIGR00331">
    <property type="entry name" value="hrcA"/>
    <property type="match status" value="1"/>
</dbReference>
<dbReference type="PANTHER" id="PTHR34824">
    <property type="entry name" value="HEAT-INDUCIBLE TRANSCRIPTION REPRESSOR HRCA"/>
    <property type="match status" value="1"/>
</dbReference>
<dbReference type="PANTHER" id="PTHR34824:SF1">
    <property type="entry name" value="HEAT-INDUCIBLE TRANSCRIPTION REPRESSOR HRCA"/>
    <property type="match status" value="1"/>
</dbReference>
<dbReference type="Pfam" id="PF01628">
    <property type="entry name" value="HrcA"/>
    <property type="match status" value="1"/>
</dbReference>
<dbReference type="PIRSF" id="PIRSF005485">
    <property type="entry name" value="HrcA"/>
    <property type="match status" value="1"/>
</dbReference>
<dbReference type="SUPFAM" id="SSF55781">
    <property type="entry name" value="GAF domain-like"/>
    <property type="match status" value="1"/>
</dbReference>
<dbReference type="SUPFAM" id="SSF46785">
    <property type="entry name" value="Winged helix' DNA-binding domain"/>
    <property type="match status" value="1"/>
</dbReference>
<accession>P68794</accession>
<accession>P45556</accession>